<feature type="chain" id="PRO_1000195190" description="Holliday junction branch migration complex subunit RuvB">
    <location>
        <begin position="1"/>
        <end position="334"/>
    </location>
</feature>
<feature type="region of interest" description="Large ATPase domain (RuvB-L)" evidence="1">
    <location>
        <begin position="1"/>
        <end position="181"/>
    </location>
</feature>
<feature type="region of interest" description="Small ATPAse domain (RuvB-S)" evidence="1">
    <location>
        <begin position="182"/>
        <end position="252"/>
    </location>
</feature>
<feature type="region of interest" description="Head domain (RuvB-H)" evidence="1">
    <location>
        <begin position="255"/>
        <end position="334"/>
    </location>
</feature>
<feature type="binding site" evidence="1">
    <location>
        <position position="20"/>
    </location>
    <ligand>
        <name>ATP</name>
        <dbReference type="ChEBI" id="CHEBI:30616"/>
    </ligand>
</feature>
<feature type="binding site" evidence="1">
    <location>
        <position position="21"/>
    </location>
    <ligand>
        <name>ATP</name>
        <dbReference type="ChEBI" id="CHEBI:30616"/>
    </ligand>
</feature>
<feature type="binding site" evidence="1">
    <location>
        <position position="62"/>
    </location>
    <ligand>
        <name>ATP</name>
        <dbReference type="ChEBI" id="CHEBI:30616"/>
    </ligand>
</feature>
<feature type="binding site" evidence="1">
    <location>
        <position position="65"/>
    </location>
    <ligand>
        <name>ATP</name>
        <dbReference type="ChEBI" id="CHEBI:30616"/>
    </ligand>
</feature>
<feature type="binding site" evidence="1">
    <location>
        <position position="66"/>
    </location>
    <ligand>
        <name>ATP</name>
        <dbReference type="ChEBI" id="CHEBI:30616"/>
    </ligand>
</feature>
<feature type="binding site" evidence="1">
    <location>
        <position position="66"/>
    </location>
    <ligand>
        <name>Mg(2+)</name>
        <dbReference type="ChEBI" id="CHEBI:18420"/>
    </ligand>
</feature>
<feature type="binding site" evidence="1">
    <location>
        <position position="67"/>
    </location>
    <ligand>
        <name>ATP</name>
        <dbReference type="ChEBI" id="CHEBI:30616"/>
    </ligand>
</feature>
<feature type="binding site" evidence="1">
    <location>
        <begin position="128"/>
        <end position="130"/>
    </location>
    <ligand>
        <name>ATP</name>
        <dbReference type="ChEBI" id="CHEBI:30616"/>
    </ligand>
</feature>
<feature type="binding site" evidence="1">
    <location>
        <position position="171"/>
    </location>
    <ligand>
        <name>ATP</name>
        <dbReference type="ChEBI" id="CHEBI:30616"/>
    </ligand>
</feature>
<feature type="binding site" evidence="1">
    <location>
        <position position="181"/>
    </location>
    <ligand>
        <name>ATP</name>
        <dbReference type="ChEBI" id="CHEBI:30616"/>
    </ligand>
</feature>
<feature type="binding site" evidence="1">
    <location>
        <position position="218"/>
    </location>
    <ligand>
        <name>ATP</name>
        <dbReference type="ChEBI" id="CHEBI:30616"/>
    </ligand>
</feature>
<feature type="binding site" evidence="1">
    <location>
        <position position="310"/>
    </location>
    <ligand>
        <name>DNA</name>
        <dbReference type="ChEBI" id="CHEBI:16991"/>
    </ligand>
</feature>
<feature type="binding site" evidence="1">
    <location>
        <position position="315"/>
    </location>
    <ligand>
        <name>DNA</name>
        <dbReference type="ChEBI" id="CHEBI:16991"/>
    </ligand>
</feature>
<keyword id="KW-0067">ATP-binding</keyword>
<keyword id="KW-0963">Cytoplasm</keyword>
<keyword id="KW-0227">DNA damage</keyword>
<keyword id="KW-0233">DNA recombination</keyword>
<keyword id="KW-0234">DNA repair</keyword>
<keyword id="KW-0238">DNA-binding</keyword>
<keyword id="KW-0378">Hydrolase</keyword>
<keyword id="KW-0547">Nucleotide-binding</keyword>
<dbReference type="EC" id="3.6.4.-" evidence="1"/>
<dbReference type="EMBL" id="CP001172">
    <property type="protein sequence ID" value="ACJ59044.1"/>
    <property type="molecule type" value="Genomic_DNA"/>
</dbReference>
<dbReference type="RefSeq" id="WP_001154002.1">
    <property type="nucleotide sequence ID" value="NZ_CP001172.1"/>
</dbReference>
<dbReference type="SMR" id="B7GYB5"/>
<dbReference type="GeneID" id="92894861"/>
<dbReference type="HOGENOM" id="CLU_055599_1_0_6"/>
<dbReference type="Proteomes" id="UP000006924">
    <property type="component" value="Chromosome"/>
</dbReference>
<dbReference type="GO" id="GO:0005737">
    <property type="term" value="C:cytoplasm"/>
    <property type="evidence" value="ECO:0007669"/>
    <property type="project" value="UniProtKB-SubCell"/>
</dbReference>
<dbReference type="GO" id="GO:0048476">
    <property type="term" value="C:Holliday junction resolvase complex"/>
    <property type="evidence" value="ECO:0007669"/>
    <property type="project" value="UniProtKB-UniRule"/>
</dbReference>
<dbReference type="GO" id="GO:0005524">
    <property type="term" value="F:ATP binding"/>
    <property type="evidence" value="ECO:0007669"/>
    <property type="project" value="UniProtKB-UniRule"/>
</dbReference>
<dbReference type="GO" id="GO:0016887">
    <property type="term" value="F:ATP hydrolysis activity"/>
    <property type="evidence" value="ECO:0007669"/>
    <property type="project" value="InterPro"/>
</dbReference>
<dbReference type="GO" id="GO:0000400">
    <property type="term" value="F:four-way junction DNA binding"/>
    <property type="evidence" value="ECO:0007669"/>
    <property type="project" value="UniProtKB-UniRule"/>
</dbReference>
<dbReference type="GO" id="GO:0009378">
    <property type="term" value="F:four-way junction helicase activity"/>
    <property type="evidence" value="ECO:0007669"/>
    <property type="project" value="InterPro"/>
</dbReference>
<dbReference type="GO" id="GO:0006310">
    <property type="term" value="P:DNA recombination"/>
    <property type="evidence" value="ECO:0007669"/>
    <property type="project" value="UniProtKB-UniRule"/>
</dbReference>
<dbReference type="GO" id="GO:0006281">
    <property type="term" value="P:DNA repair"/>
    <property type="evidence" value="ECO:0007669"/>
    <property type="project" value="UniProtKB-UniRule"/>
</dbReference>
<dbReference type="CDD" id="cd00009">
    <property type="entry name" value="AAA"/>
    <property type="match status" value="1"/>
</dbReference>
<dbReference type="FunFam" id="1.10.8.60:FF:000023">
    <property type="entry name" value="Holliday junction ATP-dependent DNA helicase RuvB"/>
    <property type="match status" value="1"/>
</dbReference>
<dbReference type="FunFam" id="3.40.50.300:FF:000073">
    <property type="entry name" value="Holliday junction ATP-dependent DNA helicase RuvB"/>
    <property type="match status" value="1"/>
</dbReference>
<dbReference type="Gene3D" id="1.10.8.60">
    <property type="match status" value="1"/>
</dbReference>
<dbReference type="Gene3D" id="3.40.50.300">
    <property type="entry name" value="P-loop containing nucleotide triphosphate hydrolases"/>
    <property type="match status" value="1"/>
</dbReference>
<dbReference type="Gene3D" id="1.10.10.10">
    <property type="entry name" value="Winged helix-like DNA-binding domain superfamily/Winged helix DNA-binding domain"/>
    <property type="match status" value="1"/>
</dbReference>
<dbReference type="HAMAP" id="MF_00016">
    <property type="entry name" value="DNA_HJ_migration_RuvB"/>
    <property type="match status" value="1"/>
</dbReference>
<dbReference type="InterPro" id="IPR003593">
    <property type="entry name" value="AAA+_ATPase"/>
</dbReference>
<dbReference type="InterPro" id="IPR041445">
    <property type="entry name" value="AAA_lid_4"/>
</dbReference>
<dbReference type="InterPro" id="IPR004605">
    <property type="entry name" value="DNA_helicase_Holl-junc_RuvB"/>
</dbReference>
<dbReference type="InterPro" id="IPR027417">
    <property type="entry name" value="P-loop_NTPase"/>
</dbReference>
<dbReference type="InterPro" id="IPR008824">
    <property type="entry name" value="RuvB-like_N"/>
</dbReference>
<dbReference type="InterPro" id="IPR008823">
    <property type="entry name" value="RuvB_C"/>
</dbReference>
<dbReference type="InterPro" id="IPR036388">
    <property type="entry name" value="WH-like_DNA-bd_sf"/>
</dbReference>
<dbReference type="InterPro" id="IPR036390">
    <property type="entry name" value="WH_DNA-bd_sf"/>
</dbReference>
<dbReference type="NCBIfam" id="NF000868">
    <property type="entry name" value="PRK00080.1"/>
    <property type="match status" value="1"/>
</dbReference>
<dbReference type="NCBIfam" id="TIGR00635">
    <property type="entry name" value="ruvB"/>
    <property type="match status" value="1"/>
</dbReference>
<dbReference type="PANTHER" id="PTHR42848">
    <property type="match status" value="1"/>
</dbReference>
<dbReference type="PANTHER" id="PTHR42848:SF1">
    <property type="entry name" value="HOLLIDAY JUNCTION BRANCH MIGRATION COMPLEX SUBUNIT RUVB"/>
    <property type="match status" value="1"/>
</dbReference>
<dbReference type="Pfam" id="PF17864">
    <property type="entry name" value="AAA_lid_4"/>
    <property type="match status" value="1"/>
</dbReference>
<dbReference type="Pfam" id="PF05491">
    <property type="entry name" value="RuvB_C"/>
    <property type="match status" value="1"/>
</dbReference>
<dbReference type="Pfam" id="PF05496">
    <property type="entry name" value="RuvB_N"/>
    <property type="match status" value="1"/>
</dbReference>
<dbReference type="SMART" id="SM00382">
    <property type="entry name" value="AAA"/>
    <property type="match status" value="1"/>
</dbReference>
<dbReference type="SUPFAM" id="SSF52540">
    <property type="entry name" value="P-loop containing nucleoside triphosphate hydrolases"/>
    <property type="match status" value="1"/>
</dbReference>
<dbReference type="SUPFAM" id="SSF46785">
    <property type="entry name" value="Winged helix' DNA-binding domain"/>
    <property type="match status" value="1"/>
</dbReference>
<evidence type="ECO:0000255" key="1">
    <source>
        <dbReference type="HAMAP-Rule" id="MF_00016"/>
    </source>
</evidence>
<protein>
    <recommendedName>
        <fullName evidence="1">Holliday junction branch migration complex subunit RuvB</fullName>
        <ecNumber evidence="1">3.6.4.-</ecNumber>
    </recommendedName>
</protein>
<organism>
    <name type="scientific">Acinetobacter baumannii (strain AB307-0294)</name>
    <dbReference type="NCBI Taxonomy" id="557600"/>
    <lineage>
        <taxon>Bacteria</taxon>
        <taxon>Pseudomonadati</taxon>
        <taxon>Pseudomonadota</taxon>
        <taxon>Gammaproteobacteria</taxon>
        <taxon>Moraxellales</taxon>
        <taxon>Moraxellaceae</taxon>
        <taxon>Acinetobacter</taxon>
        <taxon>Acinetobacter calcoaceticus/baumannii complex</taxon>
    </lineage>
</organism>
<proteinExistence type="inferred from homology"/>
<name>RUVB_ACIB3</name>
<accession>B7GYB5</accession>
<reference key="1">
    <citation type="journal article" date="2008" name="J. Bacteriol.">
        <title>Comparative genome sequence analysis of multidrug-resistant Acinetobacter baumannii.</title>
        <authorList>
            <person name="Adams M.D."/>
            <person name="Goglin K."/>
            <person name="Molyneaux N."/>
            <person name="Hujer K.M."/>
            <person name="Lavender H."/>
            <person name="Jamison J.J."/>
            <person name="MacDonald I.J."/>
            <person name="Martin K.M."/>
            <person name="Russo T."/>
            <person name="Campagnari A.A."/>
            <person name="Hujer A.M."/>
            <person name="Bonomo R.A."/>
            <person name="Gill S.R."/>
        </authorList>
    </citation>
    <scope>NUCLEOTIDE SEQUENCE [LARGE SCALE GENOMIC DNA]</scope>
    <source>
        <strain>AB307-0294</strain>
    </source>
</reference>
<gene>
    <name evidence="1" type="primary">ruvB</name>
    <name type="ordered locus">ABBFA_000892</name>
</gene>
<sequence length="334" mass="36815">MQDRLISGTEKPEDHFDRAIRPTSLADYIGQPVVREQMEIFIGAARGRGEALDHTLIFGPPGLGKTTLANIIAREMGGNLKSTSGPVLERAGDLAAMLTNLEEGDVLFIDEIHRLSPVIEEILYPAMEDYQLDIMIGEGPAARSIKLDLPPFTLVAATTRAGLLTSPLRDRFGIVQRLEFYSVEDLTHIVSRSANLMDVPITVEGAEEVARRSRGTPRIANRLLRRVRDYAQVKGTGEVNHEMAQRALDMLNVDKAGLDTLDRRYLSMLLERFDGGPAGVEALAAAMAEDSGTLEDVIEPYLIQQGYVMRTARGRIATNQSYLQFGMTPPEPKN</sequence>
<comment type="function">
    <text evidence="1">The RuvA-RuvB-RuvC complex processes Holliday junction (HJ) DNA during genetic recombination and DNA repair, while the RuvA-RuvB complex plays an important role in the rescue of blocked DNA replication forks via replication fork reversal (RFR). RuvA specifically binds to HJ cruciform DNA, conferring on it an open structure. The RuvB hexamer acts as an ATP-dependent pump, pulling dsDNA into and through the RuvAB complex. RuvB forms 2 homohexamers on either side of HJ DNA bound by 1 or 2 RuvA tetramers; 4 subunits per hexamer contact DNA at a time. Coordinated motions by a converter formed by DNA-disengaged RuvB subunits stimulates ATP hydrolysis and nucleotide exchange. Immobilization of the converter enables RuvB to convert the ATP-contained energy into a lever motion, pulling 2 nucleotides of DNA out of the RuvA tetramer per ATP hydrolyzed, thus driving DNA branch migration. The RuvB motors rotate together with the DNA substrate, which together with the progressing nucleotide cycle form the mechanistic basis for DNA recombination by continuous HJ branch migration. Branch migration allows RuvC to scan DNA until it finds its consensus sequence, where it cleaves and resolves cruciform DNA.</text>
</comment>
<comment type="catalytic activity">
    <reaction evidence="1">
        <text>ATP + H2O = ADP + phosphate + H(+)</text>
        <dbReference type="Rhea" id="RHEA:13065"/>
        <dbReference type="ChEBI" id="CHEBI:15377"/>
        <dbReference type="ChEBI" id="CHEBI:15378"/>
        <dbReference type="ChEBI" id="CHEBI:30616"/>
        <dbReference type="ChEBI" id="CHEBI:43474"/>
        <dbReference type="ChEBI" id="CHEBI:456216"/>
    </reaction>
</comment>
<comment type="subunit">
    <text evidence="1">Homohexamer. Forms an RuvA(8)-RuvB(12)-Holliday junction (HJ) complex. HJ DNA is sandwiched between 2 RuvA tetramers; dsDNA enters through RuvA and exits via RuvB. An RuvB hexamer assembles on each DNA strand where it exits the tetramer. Each RuvB hexamer is contacted by two RuvA subunits (via domain III) on 2 adjacent RuvB subunits; this complex drives branch migration. In the full resolvosome a probable DNA-RuvA(4)-RuvB(12)-RuvC(2) complex forms which resolves the HJ.</text>
</comment>
<comment type="subcellular location">
    <subcellularLocation>
        <location evidence="1">Cytoplasm</location>
    </subcellularLocation>
</comment>
<comment type="domain">
    <text evidence="1">Has 3 domains, the large (RuvB-L) and small ATPase (RuvB-S) domains and the C-terminal head (RuvB-H) domain. The head domain binds DNA, while the ATPase domains jointly bind ATP, ADP or are empty depending on the state of the subunit in the translocation cycle. During a single DNA translocation step the structure of each domain remains the same, but their relative positions change.</text>
</comment>
<comment type="similarity">
    <text evidence="1">Belongs to the RuvB family.</text>
</comment>